<protein>
    <recommendedName>
        <fullName>Substance P</fullName>
    </recommendedName>
</protein>
<feature type="peptide" id="PRO_0000044424" description="Substance P">
    <location>
        <begin position="1"/>
        <end position="11"/>
    </location>
</feature>
<feature type="modified residue" description="Methionine amide" evidence="1">
    <location>
        <position position="11"/>
    </location>
</feature>
<sequence>KPRPGQFFGLM</sequence>
<reference key="1">
    <citation type="journal article" date="1993" name="Eur. J. Biochem.">
        <title>Primary structures and biological activities of substance-P-related peptides from the brain of the dogfish, Scyliorhinus canicula.</title>
        <authorList>
            <person name="Waugh D."/>
            <person name="Wang Y."/>
            <person name="Hazon N."/>
            <person name="Balment R.J."/>
            <person name="Conlon J.M."/>
        </authorList>
    </citation>
    <scope>PROTEIN SEQUENCE</scope>
    <scope>AMIDATION AT MET-11</scope>
    <source>
        <tissue>Brain</tissue>
    </source>
</reference>
<keyword id="KW-0027">Amidation</keyword>
<keyword id="KW-0903">Direct protein sequencing</keyword>
<keyword id="KW-0527">Neuropeptide</keyword>
<keyword id="KW-0529">Neurotransmitter</keyword>
<keyword id="KW-0964">Secreted</keyword>
<evidence type="ECO:0000269" key="1">
    <source>
    </source>
</evidence>
<evidence type="ECO:0000305" key="2"/>
<organism>
    <name type="scientific">Scyliorhinus canicula</name>
    <name type="common">Small-spotted catshark</name>
    <name type="synonym">Squalus canicula</name>
    <dbReference type="NCBI Taxonomy" id="7830"/>
    <lineage>
        <taxon>Eukaryota</taxon>
        <taxon>Metazoa</taxon>
        <taxon>Chordata</taxon>
        <taxon>Craniata</taxon>
        <taxon>Vertebrata</taxon>
        <taxon>Chondrichthyes</taxon>
        <taxon>Elasmobranchii</taxon>
        <taxon>Galeomorphii</taxon>
        <taxon>Galeoidea</taxon>
        <taxon>Carcharhiniformes</taxon>
        <taxon>Scyliorhinidae</taxon>
        <taxon>Scyliorhinus</taxon>
    </lineage>
</organism>
<comment type="function">
    <text>Tachykinins are active peptides which excite neurons, evoke behavioral responses, are potent vasodilators and secretagogues, and contract (directly or indirectly) many smooth muscles.</text>
</comment>
<comment type="subcellular location">
    <subcellularLocation>
        <location>Secreted</location>
    </subcellularLocation>
</comment>
<comment type="similarity">
    <text evidence="2">Belongs to the tachykinin family.</text>
</comment>
<proteinExistence type="evidence at protein level"/>
<name>TKNA_SCYCA</name>
<dbReference type="PIR" id="S33300">
    <property type="entry name" value="S33300"/>
</dbReference>
<dbReference type="GO" id="GO:0005576">
    <property type="term" value="C:extracellular region"/>
    <property type="evidence" value="ECO:0007669"/>
    <property type="project" value="UniProtKB-SubCell"/>
</dbReference>
<dbReference type="GO" id="GO:0045202">
    <property type="term" value="C:synapse"/>
    <property type="evidence" value="ECO:0007669"/>
    <property type="project" value="GOC"/>
</dbReference>
<dbReference type="GO" id="GO:0007268">
    <property type="term" value="P:chemical synaptic transmission"/>
    <property type="evidence" value="ECO:0007669"/>
    <property type="project" value="UniProtKB-KW"/>
</dbReference>
<dbReference type="GO" id="GO:0007218">
    <property type="term" value="P:neuropeptide signaling pathway"/>
    <property type="evidence" value="ECO:0007669"/>
    <property type="project" value="UniProtKB-KW"/>
</dbReference>
<dbReference type="InterPro" id="IPR013055">
    <property type="entry name" value="Tachy_Neuro_lke_CS"/>
</dbReference>
<dbReference type="PROSITE" id="PS00267">
    <property type="entry name" value="TACHYKININ"/>
    <property type="match status" value="1"/>
</dbReference>
<accession>P41333</accession>